<sequence>MEGFFWKTLLVVGALTISGTSSFPHKPLTYEEAVDLAVSVYNSKSGEDSLYRLLEAVPALKWDALSESNQELNFSVKETVCQMAEERSLEECDFQEAGAVMGCTGYYFFGESPPVLVLTCKSVGNEEEQKQEEGNEEEKEVEKEEKEEDQKDQPKRVKRFKKFFKKLKNSVKKRAKKFFKKPKVIGVTFPF</sequence>
<name>CAMP_NAJAT</name>
<reference key="1">
    <citation type="journal article" date="2008" name="Peptides">
        <title>Identification and characterization of novel reptile cathelicidins from elapid snakes.</title>
        <authorList>
            <person name="Zhao H."/>
            <person name="Gan T.-X."/>
            <person name="Liu X.-D."/>
            <person name="Jin Y."/>
            <person name="Lee W.-H."/>
            <person name="Shen J.-H."/>
            <person name="Zhang Y."/>
        </authorList>
    </citation>
    <scope>NUCLEOTIDE SEQUENCE [MRNA]</scope>
    <source>
        <tissue>Venom gland</tissue>
    </source>
</reference>
<comment type="function">
    <text evidence="2">Potent antimicrobial peptide against most of Gram-negative bacteria, some Gram-positive bacteria (Bacillus) and some fungi. Adopts an amphipathic alpha helical conformation, that may allow to partition into the target membrane. No hemolytic and cytotoxic activities have been observed on mammalian cells.</text>
</comment>
<comment type="subcellular location">
    <subcellularLocation>
        <location evidence="1">Secreted</location>
    </subcellularLocation>
    <subcellularLocation>
        <location evidence="6">Target cell membrane</location>
    </subcellularLocation>
    <text evidence="6">Forms a helical membrane channel in the prey.</text>
</comment>
<comment type="tissue specificity">
    <text evidence="7">Expressed by the venom gland.</text>
</comment>
<comment type="similarity">
    <text evidence="6">Belongs to the cathelicidin family.</text>
</comment>
<protein>
    <recommendedName>
        <fullName>Cathelicidin-related antimicrobial peptide Na_CRAMP</fullName>
    </recommendedName>
    <alternativeName>
        <fullName>Cathelicidin-NA antimicrobial peptide</fullName>
    </alternativeName>
    <alternativeName>
        <fullName evidence="3">Vipericidin</fullName>
    </alternativeName>
</protein>
<evidence type="ECO:0000250" key="1"/>
<evidence type="ECO:0000250" key="2">
    <source>
        <dbReference type="UniProtKB" id="B6D434"/>
    </source>
</evidence>
<evidence type="ECO:0000250" key="3">
    <source>
        <dbReference type="UniProtKB" id="U5KJM4"/>
    </source>
</evidence>
<evidence type="ECO:0000255" key="4"/>
<evidence type="ECO:0000256" key="5">
    <source>
        <dbReference type="SAM" id="MobiDB-lite"/>
    </source>
</evidence>
<evidence type="ECO:0000305" key="6"/>
<evidence type="ECO:0000305" key="7">
    <source>
    </source>
</evidence>
<accession>B6S2X0</accession>
<feature type="signal peptide" evidence="4">
    <location>
        <begin position="1"/>
        <end position="22"/>
    </location>
</feature>
<feature type="propeptide" id="PRO_0000410960" evidence="7">
    <location>
        <begin position="23"/>
        <end position="161"/>
    </location>
</feature>
<feature type="peptide" id="PRO_0000410961" description="Cathelicidin-related antimicrobial peptide Na_CRAMP" evidence="7">
    <location>
        <begin position="158"/>
        <end position="191"/>
    </location>
</feature>
<feature type="region of interest" description="Disordered" evidence="5">
    <location>
        <begin position="126"/>
        <end position="154"/>
    </location>
</feature>
<feature type="compositionally biased region" description="Basic and acidic residues" evidence="5">
    <location>
        <begin position="140"/>
        <end position="154"/>
    </location>
</feature>
<feature type="disulfide bond" evidence="1">
    <location>
        <begin position="81"/>
        <end position="92"/>
    </location>
</feature>
<feature type="disulfide bond" evidence="1">
    <location>
        <begin position="103"/>
        <end position="120"/>
    </location>
</feature>
<organism>
    <name type="scientific">Naja atra</name>
    <name type="common">Chinese cobra</name>
    <dbReference type="NCBI Taxonomy" id="8656"/>
    <lineage>
        <taxon>Eukaryota</taxon>
        <taxon>Metazoa</taxon>
        <taxon>Chordata</taxon>
        <taxon>Craniata</taxon>
        <taxon>Vertebrata</taxon>
        <taxon>Euteleostomi</taxon>
        <taxon>Lepidosauria</taxon>
        <taxon>Squamata</taxon>
        <taxon>Bifurcata</taxon>
        <taxon>Unidentata</taxon>
        <taxon>Episquamata</taxon>
        <taxon>Toxicofera</taxon>
        <taxon>Serpentes</taxon>
        <taxon>Colubroidea</taxon>
        <taxon>Elapidae</taxon>
        <taxon>Elapinae</taxon>
        <taxon>Naja</taxon>
    </lineage>
</organism>
<keyword id="KW-0044">Antibiotic</keyword>
<keyword id="KW-0929">Antimicrobial</keyword>
<keyword id="KW-0165">Cleavage on pair of basic residues</keyword>
<keyword id="KW-1015">Disulfide bond</keyword>
<keyword id="KW-0295">Fungicide</keyword>
<keyword id="KW-0472">Membrane</keyword>
<keyword id="KW-0964">Secreted</keyword>
<keyword id="KW-0732">Signal</keyword>
<keyword id="KW-1052">Target cell membrane</keyword>
<keyword id="KW-1053">Target membrane</keyword>
<proteinExistence type="evidence at transcript level"/>
<dbReference type="EMBL" id="EU622892">
    <property type="protein sequence ID" value="ACF21000.1"/>
    <property type="molecule type" value="mRNA"/>
</dbReference>
<dbReference type="SMR" id="B6S2X0"/>
<dbReference type="GO" id="GO:0005615">
    <property type="term" value="C:extracellular space"/>
    <property type="evidence" value="ECO:0007669"/>
    <property type="project" value="TreeGrafter"/>
</dbReference>
<dbReference type="GO" id="GO:0016020">
    <property type="term" value="C:membrane"/>
    <property type="evidence" value="ECO:0007669"/>
    <property type="project" value="UniProtKB-KW"/>
</dbReference>
<dbReference type="GO" id="GO:0044218">
    <property type="term" value="C:other organism cell membrane"/>
    <property type="evidence" value="ECO:0007669"/>
    <property type="project" value="UniProtKB-KW"/>
</dbReference>
<dbReference type="GO" id="GO:0042742">
    <property type="term" value="P:defense response to bacterium"/>
    <property type="evidence" value="ECO:0000250"/>
    <property type="project" value="UniProtKB"/>
</dbReference>
<dbReference type="GO" id="GO:0050832">
    <property type="term" value="P:defense response to fungus"/>
    <property type="evidence" value="ECO:0000250"/>
    <property type="project" value="UniProtKB"/>
</dbReference>
<dbReference type="GO" id="GO:0045087">
    <property type="term" value="P:innate immune response"/>
    <property type="evidence" value="ECO:0000303"/>
    <property type="project" value="UniProtKB"/>
</dbReference>
<dbReference type="GO" id="GO:0031640">
    <property type="term" value="P:killing of cells of another organism"/>
    <property type="evidence" value="ECO:0000250"/>
    <property type="project" value="UniProtKB"/>
</dbReference>
<dbReference type="FunFam" id="3.10.450.10:FF:000034">
    <property type="entry name" value="Cathelicidin-related peptide Oh-Cath"/>
    <property type="match status" value="1"/>
</dbReference>
<dbReference type="Gene3D" id="3.10.450.10">
    <property type="match status" value="1"/>
</dbReference>
<dbReference type="InterPro" id="IPR001894">
    <property type="entry name" value="Cathelicidin-like"/>
</dbReference>
<dbReference type="InterPro" id="IPR046350">
    <property type="entry name" value="Cystatin_sf"/>
</dbReference>
<dbReference type="PANTHER" id="PTHR10206">
    <property type="entry name" value="CATHELICIDIN"/>
    <property type="match status" value="1"/>
</dbReference>
<dbReference type="PANTHER" id="PTHR10206:SF4">
    <property type="entry name" value="NEUTROPHILIC GRANULE PROTEIN"/>
    <property type="match status" value="1"/>
</dbReference>
<dbReference type="Pfam" id="PF00666">
    <property type="entry name" value="Cathelicidins"/>
    <property type="match status" value="1"/>
</dbReference>
<dbReference type="SUPFAM" id="SSF54403">
    <property type="entry name" value="Cystatin/monellin"/>
    <property type="match status" value="1"/>
</dbReference>